<proteinExistence type="inferred from homology"/>
<feature type="chain" id="PRO_0000102070" description="ATP-dependent DNA helicase Rep">
    <location>
        <begin position="1"/>
        <end position="674"/>
    </location>
</feature>
<feature type="domain" description="UvrD-like helicase ATP-binding" evidence="1">
    <location>
        <begin position="1"/>
        <end position="280"/>
    </location>
</feature>
<feature type="domain" description="UvrD-like helicase C-terminal" evidence="1">
    <location>
        <begin position="281"/>
        <end position="562"/>
    </location>
</feature>
<feature type="binding site" evidence="1">
    <location>
        <begin position="22"/>
        <end position="29"/>
    </location>
    <ligand>
        <name>ATP</name>
        <dbReference type="ChEBI" id="CHEBI:30616"/>
    </ligand>
</feature>
<feature type="binding site" evidence="1">
    <location>
        <position position="278"/>
    </location>
    <ligand>
        <name>ATP</name>
        <dbReference type="ChEBI" id="CHEBI:30616"/>
    </ligand>
</feature>
<evidence type="ECO:0000255" key="1">
    <source>
        <dbReference type="HAMAP-Rule" id="MF_01920"/>
    </source>
</evidence>
<accession>Q9L6S1</accession>
<dbReference type="EC" id="5.6.2.4" evidence="1"/>
<dbReference type="EMBL" id="AF233324">
    <property type="protein sequence ID" value="AAF33474.1"/>
    <property type="molecule type" value="Genomic_DNA"/>
</dbReference>
<dbReference type="EMBL" id="AE006468">
    <property type="protein sequence ID" value="AAL22762.1"/>
    <property type="molecule type" value="Genomic_DNA"/>
</dbReference>
<dbReference type="RefSeq" id="NP_462803.1">
    <property type="nucleotide sequence ID" value="NC_003197.2"/>
</dbReference>
<dbReference type="RefSeq" id="WP_001238842.1">
    <property type="nucleotide sequence ID" value="NC_003197.2"/>
</dbReference>
<dbReference type="SMR" id="Q9L6S1"/>
<dbReference type="STRING" id="99287.STM3912"/>
<dbReference type="PaxDb" id="99287-STM3912"/>
<dbReference type="GeneID" id="1255438"/>
<dbReference type="KEGG" id="stm:STM3912"/>
<dbReference type="PATRIC" id="fig|99287.12.peg.4134"/>
<dbReference type="HOGENOM" id="CLU_004585_5_4_6"/>
<dbReference type="PhylomeDB" id="Q9L6S1"/>
<dbReference type="BioCyc" id="SENT99287:STM3912-MONOMER"/>
<dbReference type="Proteomes" id="UP000001014">
    <property type="component" value="Chromosome"/>
</dbReference>
<dbReference type="GO" id="GO:0005829">
    <property type="term" value="C:cytosol"/>
    <property type="evidence" value="ECO:0000318"/>
    <property type="project" value="GO_Central"/>
</dbReference>
<dbReference type="GO" id="GO:0043138">
    <property type="term" value="F:3'-5' DNA helicase activity"/>
    <property type="evidence" value="ECO:0000318"/>
    <property type="project" value="GO_Central"/>
</dbReference>
<dbReference type="GO" id="GO:0005524">
    <property type="term" value="F:ATP binding"/>
    <property type="evidence" value="ECO:0007669"/>
    <property type="project" value="UniProtKB-UniRule"/>
</dbReference>
<dbReference type="GO" id="GO:0016887">
    <property type="term" value="F:ATP hydrolysis activity"/>
    <property type="evidence" value="ECO:0007669"/>
    <property type="project" value="RHEA"/>
</dbReference>
<dbReference type="GO" id="GO:0003697">
    <property type="term" value="F:single-stranded DNA binding"/>
    <property type="evidence" value="ECO:0007669"/>
    <property type="project" value="UniProtKB-UniRule"/>
</dbReference>
<dbReference type="GO" id="GO:0006260">
    <property type="term" value="P:DNA replication"/>
    <property type="evidence" value="ECO:0007669"/>
    <property type="project" value="UniProtKB-KW"/>
</dbReference>
<dbReference type="GO" id="GO:0000725">
    <property type="term" value="P:recombinational repair"/>
    <property type="evidence" value="ECO:0000318"/>
    <property type="project" value="GO_Central"/>
</dbReference>
<dbReference type="CDD" id="cd17932">
    <property type="entry name" value="DEXQc_UvrD"/>
    <property type="match status" value="1"/>
</dbReference>
<dbReference type="CDD" id="cd18807">
    <property type="entry name" value="SF1_C_UvrD"/>
    <property type="match status" value="1"/>
</dbReference>
<dbReference type="FunFam" id="1.10.10.160:FF:000001">
    <property type="entry name" value="ATP-dependent DNA helicase"/>
    <property type="match status" value="1"/>
</dbReference>
<dbReference type="FunFam" id="1.10.486.10:FF:000002">
    <property type="entry name" value="ATP-dependent DNA helicase Rep"/>
    <property type="match status" value="1"/>
</dbReference>
<dbReference type="Gene3D" id="1.10.10.160">
    <property type="match status" value="1"/>
</dbReference>
<dbReference type="Gene3D" id="3.40.50.300">
    <property type="entry name" value="P-loop containing nucleotide triphosphate hydrolases"/>
    <property type="match status" value="2"/>
</dbReference>
<dbReference type="Gene3D" id="1.10.486.10">
    <property type="entry name" value="PCRA, domain 4"/>
    <property type="match status" value="1"/>
</dbReference>
<dbReference type="HAMAP" id="MF_01920">
    <property type="entry name" value="Helicase_Rep"/>
    <property type="match status" value="1"/>
</dbReference>
<dbReference type="InterPro" id="IPR013986">
    <property type="entry name" value="DExx_box_DNA_helicase_dom_sf"/>
</dbReference>
<dbReference type="InterPro" id="IPR014017">
    <property type="entry name" value="DNA_helicase_UvrD-like_C"/>
</dbReference>
<dbReference type="InterPro" id="IPR000212">
    <property type="entry name" value="DNA_helicase_UvrD/REP"/>
</dbReference>
<dbReference type="InterPro" id="IPR005752">
    <property type="entry name" value="Helicase_Rep"/>
</dbReference>
<dbReference type="InterPro" id="IPR027417">
    <property type="entry name" value="P-loop_NTPase"/>
</dbReference>
<dbReference type="InterPro" id="IPR014016">
    <property type="entry name" value="UvrD-like_ATP-bd"/>
</dbReference>
<dbReference type="NCBIfam" id="NF008172">
    <property type="entry name" value="PRK10919.1"/>
    <property type="match status" value="1"/>
</dbReference>
<dbReference type="NCBIfam" id="TIGR01074">
    <property type="entry name" value="rep"/>
    <property type="match status" value="1"/>
</dbReference>
<dbReference type="PANTHER" id="PTHR11070:SF64">
    <property type="entry name" value="ATP-DEPENDENT DNA HELICASE REP"/>
    <property type="match status" value="1"/>
</dbReference>
<dbReference type="PANTHER" id="PTHR11070">
    <property type="entry name" value="UVRD / RECB / PCRA DNA HELICASE FAMILY MEMBER"/>
    <property type="match status" value="1"/>
</dbReference>
<dbReference type="Pfam" id="PF00580">
    <property type="entry name" value="UvrD-helicase"/>
    <property type="match status" value="1"/>
</dbReference>
<dbReference type="Pfam" id="PF13361">
    <property type="entry name" value="UvrD_C"/>
    <property type="match status" value="1"/>
</dbReference>
<dbReference type="SUPFAM" id="SSF52540">
    <property type="entry name" value="P-loop containing nucleoside triphosphate hydrolases"/>
    <property type="match status" value="1"/>
</dbReference>
<dbReference type="PROSITE" id="PS51198">
    <property type="entry name" value="UVRD_HELICASE_ATP_BIND"/>
    <property type="match status" value="1"/>
</dbReference>
<dbReference type="PROSITE" id="PS51217">
    <property type="entry name" value="UVRD_HELICASE_CTER"/>
    <property type="match status" value="1"/>
</dbReference>
<organism>
    <name type="scientific">Salmonella typhimurium (strain LT2 / SGSC1412 / ATCC 700720)</name>
    <dbReference type="NCBI Taxonomy" id="99287"/>
    <lineage>
        <taxon>Bacteria</taxon>
        <taxon>Pseudomonadati</taxon>
        <taxon>Pseudomonadota</taxon>
        <taxon>Gammaproteobacteria</taxon>
        <taxon>Enterobacterales</taxon>
        <taxon>Enterobacteriaceae</taxon>
        <taxon>Salmonella</taxon>
    </lineage>
</organism>
<sequence>MRLNPGQQHAVEFVTGPCLVLAGAGSGKTRVITNKIAHLIRGCGYQARHIAAVTFTNKAAREMKERVGQTLGRKEARGLMISTFHTLGLDIIKREYAALGMKSNFSLFDDTDQVALLKELTEGLIEDDKVLLQQLISTISNWKNDLKTPAQAAAGAKGERDRIFAHCYGLYDAHMKACNVLDFDDLILLPTLLLQRNDEVRERWQNKIRYLLVDEYQDTNTSQYELVKLLVGQRARFTVVGDDDQSIYSWRGARPQNLVLLSQDFPALQVIKLEQNYRSSGRILKAANILIANNPHVFEKRLFSELGYGAELKVLSANNEEHEAERVTGELIAHHFVNKTQYKDYAILYRGNHQSRVFEKFLMQNRIPYKISGGTSFFSRPEIKDLLAYLRVLTNPDDDSAFLRIVNTPKREIGPATLQKLGEWAMTRNKSLFTASFDMGLSQKLTGRGYDSLTRFTHWLGEIQRLAEREPVAAVRDLIHGIDYESWLYETSPSPKAAEMRMKNVNQLFSWMTEMLEGNELDEPMTLTQVVTRFTLRDMMERGESEEELDQVQLMTLHASKGLEFPYVYMVGMEEGFLPHQSSIDEDNIEEERRLAYVGITRAQKELTFTLCKERRQYGELVRPEPSRFLLELPQDDLIWEQERKVVSAEERMQKGQSHLANLKAMMAAKRAKS</sequence>
<gene>
    <name evidence="1" type="primary">rep</name>
    <name type="ordered locus">STM3912</name>
    <name type="ORF">STMD1.79</name>
</gene>
<keyword id="KW-0067">ATP-binding</keyword>
<keyword id="KW-0235">DNA replication</keyword>
<keyword id="KW-0238">DNA-binding</keyword>
<keyword id="KW-0347">Helicase</keyword>
<keyword id="KW-0378">Hydrolase</keyword>
<keyword id="KW-0413">Isomerase</keyword>
<keyword id="KW-0547">Nucleotide-binding</keyword>
<keyword id="KW-1185">Reference proteome</keyword>
<reference key="1">
    <citation type="journal article" date="2001" name="Nature">
        <title>Complete genome sequence of Salmonella enterica serovar Typhimurium LT2.</title>
        <authorList>
            <person name="McClelland M."/>
            <person name="Sanderson K.E."/>
            <person name="Spieth J."/>
            <person name="Clifton S.W."/>
            <person name="Latreille P."/>
            <person name="Courtney L."/>
            <person name="Porwollik S."/>
            <person name="Ali J."/>
            <person name="Dante M."/>
            <person name="Du F."/>
            <person name="Hou S."/>
            <person name="Layman D."/>
            <person name="Leonard S."/>
            <person name="Nguyen C."/>
            <person name="Scott K."/>
            <person name="Holmes A."/>
            <person name="Grewal N."/>
            <person name="Mulvaney E."/>
            <person name="Ryan E."/>
            <person name="Sun H."/>
            <person name="Florea L."/>
            <person name="Miller W."/>
            <person name="Stoneking T."/>
            <person name="Nhan M."/>
            <person name="Waterston R."/>
            <person name="Wilson R.K."/>
        </authorList>
    </citation>
    <scope>NUCLEOTIDE SEQUENCE [LARGE SCALE GENOMIC DNA]</scope>
    <source>
        <strain>LT2 / SGSC1412 / ATCC 700720</strain>
    </source>
</reference>
<comment type="function">
    <text evidence="1">Rep helicase is a single-stranded DNA-dependent ATPase involved in DNA replication; it can initiate unwinding at a nick in the DNA. It binds to the single-stranded DNA and acts in a progressive fashion along the DNA in the 3' to 5' direction.</text>
</comment>
<comment type="catalytic activity">
    <reaction evidence="1">
        <text>Couples ATP hydrolysis with the unwinding of duplex DNA by translocating in the 3'-5' direction.</text>
        <dbReference type="EC" id="5.6.2.4"/>
    </reaction>
</comment>
<comment type="catalytic activity">
    <reaction evidence="1">
        <text>ATP + H2O = ADP + phosphate + H(+)</text>
        <dbReference type="Rhea" id="RHEA:13065"/>
        <dbReference type="ChEBI" id="CHEBI:15377"/>
        <dbReference type="ChEBI" id="CHEBI:15378"/>
        <dbReference type="ChEBI" id="CHEBI:30616"/>
        <dbReference type="ChEBI" id="CHEBI:43474"/>
        <dbReference type="ChEBI" id="CHEBI:456216"/>
        <dbReference type="EC" id="5.6.2.4"/>
    </reaction>
</comment>
<comment type="subunit">
    <text evidence="1">Homodimer.</text>
</comment>
<comment type="similarity">
    <text evidence="1">Belongs to the helicase family. UvrD subfamily.</text>
</comment>
<name>REP_SALTY</name>
<protein>
    <recommendedName>
        <fullName evidence="1">ATP-dependent DNA helicase Rep</fullName>
        <ecNumber evidence="1">5.6.2.4</ecNumber>
    </recommendedName>
    <alternativeName>
        <fullName evidence="1">DNA 3'-5' helicase Rep</fullName>
    </alternativeName>
</protein>